<organism>
    <name type="scientific">Klebsiella pneumoniae subsp. pneumoniae (strain ATCC 700721 / MGH 78578)</name>
    <dbReference type="NCBI Taxonomy" id="272620"/>
    <lineage>
        <taxon>Bacteria</taxon>
        <taxon>Pseudomonadati</taxon>
        <taxon>Pseudomonadota</taxon>
        <taxon>Gammaproteobacteria</taxon>
        <taxon>Enterobacterales</taxon>
        <taxon>Enterobacteriaceae</taxon>
        <taxon>Klebsiella/Raoultella group</taxon>
        <taxon>Klebsiella</taxon>
        <taxon>Klebsiella pneumoniae complex</taxon>
    </lineage>
</organism>
<gene>
    <name evidence="1" type="primary">tdcC</name>
    <name type="ordered locus">KPN78578_22590</name>
    <name type="ORF">KPN_02294</name>
</gene>
<sequence>MSTTESIASSQTSLSSWRKSDTTWTLGLFGTAIGAGVLFFPIRAGFGGLIPILVMLVLAYPIAFYCHRALARLCLSGANPSGNITETVEEHFGKTGGVVITFLYFFAICPLLWIYGVTITNTFMTFWENQLQMPALNRGVVALLLLLLMAFVIWFGKDLMVKVMSYLVWPFIASLVVISLSLIPYWNSAVIDQVNLSDIALTGHDGILVTVWLGISIMVFSFNFSPIVSSFVVSKREEYEAQFGREYTERKCSQIISRASMLMVAVVMFFAFSCLFTLSPQNMADAKAQNIPVLSYLANHFASMSGTKSTFATLLEYGASIIALVAIFKSFFGHYLGTLEGLNGLILRFGYKGDKTRVSSGKLNTLSMVFIMGSTWVVAYANPNILDLIEAMGAPIIASLLCLLPMYAIRKAPSLAKYRGRLDNLFVTAIGLLTILNIVYKLF</sequence>
<evidence type="ECO:0000255" key="1">
    <source>
        <dbReference type="HAMAP-Rule" id="MF_01583"/>
    </source>
</evidence>
<accession>A6TAU9</accession>
<feature type="chain" id="PRO_1000069292" description="Threonine/serine transporter TdcC">
    <location>
        <begin position="1"/>
        <end position="443"/>
    </location>
</feature>
<feature type="transmembrane region" description="Helical" evidence="1">
    <location>
        <begin position="22"/>
        <end position="42"/>
    </location>
</feature>
<feature type="transmembrane region" description="Helical" evidence="1">
    <location>
        <begin position="44"/>
        <end position="64"/>
    </location>
</feature>
<feature type="transmembrane region" description="Helical" evidence="1">
    <location>
        <begin position="97"/>
        <end position="117"/>
    </location>
</feature>
<feature type="transmembrane region" description="Helical" evidence="1">
    <location>
        <begin position="140"/>
        <end position="160"/>
    </location>
</feature>
<feature type="transmembrane region" description="Helical" evidence="1">
    <location>
        <begin position="163"/>
        <end position="183"/>
    </location>
</feature>
<feature type="transmembrane region" description="Helical" evidence="1">
    <location>
        <begin position="207"/>
        <end position="227"/>
    </location>
</feature>
<feature type="transmembrane region" description="Helical" evidence="1">
    <location>
        <begin position="259"/>
        <end position="279"/>
    </location>
</feature>
<feature type="transmembrane region" description="Helical" evidence="1">
    <location>
        <begin position="319"/>
        <end position="339"/>
    </location>
</feature>
<feature type="transmembrane region" description="Helical" evidence="1">
    <location>
        <begin position="366"/>
        <end position="386"/>
    </location>
</feature>
<feature type="transmembrane region" description="Helical" evidence="1">
    <location>
        <begin position="389"/>
        <end position="409"/>
    </location>
</feature>
<feature type="transmembrane region" description="Helical" evidence="1">
    <location>
        <begin position="423"/>
        <end position="443"/>
    </location>
</feature>
<proteinExistence type="inferred from homology"/>
<name>TDCC_KLEP7</name>
<dbReference type="EMBL" id="CP000647">
    <property type="protein sequence ID" value="ABR77720.1"/>
    <property type="molecule type" value="Genomic_DNA"/>
</dbReference>
<dbReference type="RefSeq" id="WP_004200322.1">
    <property type="nucleotide sequence ID" value="NC_009648.1"/>
</dbReference>
<dbReference type="SMR" id="A6TAU9"/>
<dbReference type="STRING" id="272620.KPN_02294"/>
<dbReference type="PaxDb" id="272620-KPN_02294"/>
<dbReference type="EnsemblBacteria" id="ABR77720">
    <property type="protein sequence ID" value="ABR77720"/>
    <property type="gene ID" value="KPN_02294"/>
</dbReference>
<dbReference type="GeneID" id="93272564"/>
<dbReference type="KEGG" id="kpn:KPN_02294"/>
<dbReference type="HOGENOM" id="CLU_052043_1_1_6"/>
<dbReference type="Proteomes" id="UP000000265">
    <property type="component" value="Chromosome"/>
</dbReference>
<dbReference type="GO" id="GO:0005886">
    <property type="term" value="C:plasma membrane"/>
    <property type="evidence" value="ECO:0007669"/>
    <property type="project" value="UniProtKB-SubCell"/>
</dbReference>
<dbReference type="GO" id="GO:0015194">
    <property type="term" value="F:L-serine transmembrane transporter activity"/>
    <property type="evidence" value="ECO:0007669"/>
    <property type="project" value="InterPro"/>
</dbReference>
<dbReference type="GO" id="GO:0015293">
    <property type="term" value="F:symporter activity"/>
    <property type="evidence" value="ECO:0007669"/>
    <property type="project" value="UniProtKB-UniRule"/>
</dbReference>
<dbReference type="GO" id="GO:0015565">
    <property type="term" value="F:threonine efflux transmembrane transporter activity"/>
    <property type="evidence" value="ECO:0007669"/>
    <property type="project" value="InterPro"/>
</dbReference>
<dbReference type="Gene3D" id="1.20.1740.10">
    <property type="entry name" value="Amino acid/polyamine transporter I"/>
    <property type="match status" value="1"/>
</dbReference>
<dbReference type="HAMAP" id="MF_01583">
    <property type="entry name" value="Thr_Ser_transp_TdcC"/>
    <property type="match status" value="1"/>
</dbReference>
<dbReference type="InterPro" id="IPR018227">
    <property type="entry name" value="Amino_acid_transport_2"/>
</dbReference>
<dbReference type="InterPro" id="IPR004694">
    <property type="entry name" value="Hydroxy_aa_transpt"/>
</dbReference>
<dbReference type="InterPro" id="IPR023726">
    <property type="entry name" value="Thr/Ser_transpt_TdcC"/>
</dbReference>
<dbReference type="NCBIfam" id="NF010152">
    <property type="entry name" value="PRK13629.1"/>
    <property type="match status" value="1"/>
</dbReference>
<dbReference type="NCBIfam" id="TIGR00814">
    <property type="entry name" value="stp"/>
    <property type="match status" value="1"/>
</dbReference>
<dbReference type="PANTHER" id="PTHR35334">
    <property type="entry name" value="SERINE TRANSPORTER"/>
    <property type="match status" value="1"/>
</dbReference>
<dbReference type="PANTHER" id="PTHR35334:SF1">
    <property type="entry name" value="THREONINE_SERINE TRANSPORTER TDCC"/>
    <property type="match status" value="1"/>
</dbReference>
<protein>
    <recommendedName>
        <fullName evidence="1">Threonine/serine transporter TdcC</fullName>
    </recommendedName>
    <alternativeName>
        <fullName evidence="1">H(+)/threonine-serine symporter</fullName>
    </alternativeName>
</protein>
<comment type="function">
    <text evidence="1">Involved in the import of threonine and serine into the cell, with the concomitant import of a proton (symport system).</text>
</comment>
<comment type="catalytic activity">
    <reaction evidence="1">
        <text>L-threonine(in) + H(+)(in) = L-threonine(out) + H(+)(out)</text>
        <dbReference type="Rhea" id="RHEA:28883"/>
        <dbReference type="ChEBI" id="CHEBI:15378"/>
        <dbReference type="ChEBI" id="CHEBI:57926"/>
    </reaction>
    <physiologicalReaction direction="right-to-left" evidence="1">
        <dbReference type="Rhea" id="RHEA:28885"/>
    </physiologicalReaction>
</comment>
<comment type="catalytic activity">
    <reaction evidence="1">
        <text>L-serine(in) + H(+)(in) = L-serine(out) + H(+)(out)</text>
        <dbReference type="Rhea" id="RHEA:28887"/>
        <dbReference type="ChEBI" id="CHEBI:15378"/>
        <dbReference type="ChEBI" id="CHEBI:33384"/>
    </reaction>
    <physiologicalReaction direction="right-to-left" evidence="1">
        <dbReference type="Rhea" id="RHEA:28889"/>
    </physiologicalReaction>
</comment>
<comment type="subcellular location">
    <subcellularLocation>
        <location evidence="1">Cell inner membrane</location>
        <topology evidence="1">Multi-pass membrane protein</topology>
    </subcellularLocation>
</comment>
<comment type="similarity">
    <text evidence="1">Belongs to the amino acid/polyamine transporter 2 family. SdaC/TdcC subfamily.</text>
</comment>
<keyword id="KW-0029">Amino-acid transport</keyword>
<keyword id="KW-0997">Cell inner membrane</keyword>
<keyword id="KW-1003">Cell membrane</keyword>
<keyword id="KW-0472">Membrane</keyword>
<keyword id="KW-0769">Symport</keyword>
<keyword id="KW-0812">Transmembrane</keyword>
<keyword id="KW-1133">Transmembrane helix</keyword>
<keyword id="KW-0813">Transport</keyword>
<reference key="1">
    <citation type="submission" date="2006-09" db="EMBL/GenBank/DDBJ databases">
        <authorList>
            <consortium name="The Klebsiella pneumonia Genome Sequencing Project"/>
            <person name="McClelland M."/>
            <person name="Sanderson E.K."/>
            <person name="Spieth J."/>
            <person name="Clifton W.S."/>
            <person name="Latreille P."/>
            <person name="Sabo A."/>
            <person name="Pepin K."/>
            <person name="Bhonagiri V."/>
            <person name="Porwollik S."/>
            <person name="Ali J."/>
            <person name="Wilson R.K."/>
        </authorList>
    </citation>
    <scope>NUCLEOTIDE SEQUENCE [LARGE SCALE GENOMIC DNA]</scope>
    <source>
        <strain>ATCC 700721 / MGH 78578</strain>
    </source>
</reference>